<sequence length="167" mass="18197">MSPRVLGGLAAFLCLVLDQANKLWLIHVFDIEARRPVRLAPFFDIIYERNPGISYSLFRAQSAMGRWILVALTLFAILLLSIWLWRATNRLVALALGCIIGGALGNAIDRIAAGAVADFYYFHIGSFSWYVFNLADAAIVAGVALLILDAFTSEEAGVPAPDSEGHS</sequence>
<protein>
    <recommendedName>
        <fullName evidence="1">Lipoprotein signal peptidase</fullName>
        <ecNumber evidence="1">3.4.23.36</ecNumber>
    </recommendedName>
    <alternativeName>
        <fullName evidence="1">Prolipoprotein signal peptidase</fullName>
    </alternativeName>
    <alternativeName>
        <fullName evidence="1">Signal peptidase II</fullName>
        <shortName evidence="1">SPase II</shortName>
    </alternativeName>
</protein>
<dbReference type="EC" id="3.4.23.36" evidence="1"/>
<dbReference type="EMBL" id="CP001016">
    <property type="protein sequence ID" value="ACB94650.1"/>
    <property type="molecule type" value="Genomic_DNA"/>
</dbReference>
<dbReference type="RefSeq" id="WP_012384007.1">
    <property type="nucleotide sequence ID" value="NC_010581.1"/>
</dbReference>
<dbReference type="SMR" id="B2II67"/>
<dbReference type="STRING" id="395963.Bind_1007"/>
<dbReference type="KEGG" id="bid:Bind_1007"/>
<dbReference type="eggNOG" id="COG0597">
    <property type="taxonomic scope" value="Bacteria"/>
</dbReference>
<dbReference type="HOGENOM" id="CLU_083252_4_3_5"/>
<dbReference type="OrthoDB" id="9810259at2"/>
<dbReference type="UniPathway" id="UPA00665"/>
<dbReference type="Proteomes" id="UP000001695">
    <property type="component" value="Chromosome"/>
</dbReference>
<dbReference type="GO" id="GO:0005886">
    <property type="term" value="C:plasma membrane"/>
    <property type="evidence" value="ECO:0007669"/>
    <property type="project" value="UniProtKB-SubCell"/>
</dbReference>
<dbReference type="GO" id="GO:0004190">
    <property type="term" value="F:aspartic-type endopeptidase activity"/>
    <property type="evidence" value="ECO:0007669"/>
    <property type="project" value="UniProtKB-UniRule"/>
</dbReference>
<dbReference type="GO" id="GO:0006508">
    <property type="term" value="P:proteolysis"/>
    <property type="evidence" value="ECO:0007669"/>
    <property type="project" value="UniProtKB-KW"/>
</dbReference>
<dbReference type="HAMAP" id="MF_00161">
    <property type="entry name" value="LspA"/>
    <property type="match status" value="1"/>
</dbReference>
<dbReference type="InterPro" id="IPR001872">
    <property type="entry name" value="Peptidase_A8"/>
</dbReference>
<dbReference type="NCBIfam" id="TIGR00077">
    <property type="entry name" value="lspA"/>
    <property type="match status" value="1"/>
</dbReference>
<dbReference type="PANTHER" id="PTHR33695">
    <property type="entry name" value="LIPOPROTEIN SIGNAL PEPTIDASE"/>
    <property type="match status" value="1"/>
</dbReference>
<dbReference type="PANTHER" id="PTHR33695:SF1">
    <property type="entry name" value="LIPOPROTEIN SIGNAL PEPTIDASE"/>
    <property type="match status" value="1"/>
</dbReference>
<dbReference type="Pfam" id="PF01252">
    <property type="entry name" value="Peptidase_A8"/>
    <property type="match status" value="1"/>
</dbReference>
<dbReference type="PRINTS" id="PR00781">
    <property type="entry name" value="LIPOSIGPTASE"/>
</dbReference>
<dbReference type="PROSITE" id="PS00855">
    <property type="entry name" value="SPASE_II"/>
    <property type="match status" value="1"/>
</dbReference>
<reference key="1">
    <citation type="journal article" date="2010" name="J. Bacteriol.">
        <title>Complete genome sequence of Beijerinckia indica subsp. indica.</title>
        <authorList>
            <person name="Tamas I."/>
            <person name="Dedysh S.N."/>
            <person name="Liesack W."/>
            <person name="Stott M.B."/>
            <person name="Alam M."/>
            <person name="Murrell J.C."/>
            <person name="Dunfield P.F."/>
        </authorList>
    </citation>
    <scope>NUCLEOTIDE SEQUENCE [LARGE SCALE GENOMIC DNA]</scope>
    <source>
        <strain>ATCC 9039 / DSM 1715 / NCIMB 8712</strain>
    </source>
</reference>
<keyword id="KW-0064">Aspartyl protease</keyword>
<keyword id="KW-0997">Cell inner membrane</keyword>
<keyword id="KW-1003">Cell membrane</keyword>
<keyword id="KW-0378">Hydrolase</keyword>
<keyword id="KW-0472">Membrane</keyword>
<keyword id="KW-0645">Protease</keyword>
<keyword id="KW-1185">Reference proteome</keyword>
<keyword id="KW-0812">Transmembrane</keyword>
<keyword id="KW-1133">Transmembrane helix</keyword>
<gene>
    <name evidence="1" type="primary">lspA</name>
    <name type="ordered locus">Bind_1007</name>
</gene>
<organism>
    <name type="scientific">Beijerinckia indica subsp. indica (strain ATCC 9039 / DSM 1715 / NCIMB 8712)</name>
    <dbReference type="NCBI Taxonomy" id="395963"/>
    <lineage>
        <taxon>Bacteria</taxon>
        <taxon>Pseudomonadati</taxon>
        <taxon>Pseudomonadota</taxon>
        <taxon>Alphaproteobacteria</taxon>
        <taxon>Hyphomicrobiales</taxon>
        <taxon>Beijerinckiaceae</taxon>
        <taxon>Beijerinckia</taxon>
    </lineage>
</organism>
<proteinExistence type="inferred from homology"/>
<accession>B2II67</accession>
<comment type="function">
    <text evidence="1">This protein specifically catalyzes the removal of signal peptides from prolipoproteins.</text>
</comment>
<comment type="catalytic activity">
    <reaction evidence="1">
        <text>Release of signal peptides from bacterial membrane prolipoproteins. Hydrolyzes -Xaa-Yaa-Zaa-|-(S,diacylglyceryl)Cys-, in which Xaa is hydrophobic (preferably Leu), and Yaa (Ala or Ser) and Zaa (Gly or Ala) have small, neutral side chains.</text>
        <dbReference type="EC" id="3.4.23.36"/>
    </reaction>
</comment>
<comment type="pathway">
    <text evidence="1">Protein modification; lipoprotein biosynthesis (signal peptide cleavage).</text>
</comment>
<comment type="subcellular location">
    <subcellularLocation>
        <location evidence="1">Cell inner membrane</location>
        <topology evidence="1">Multi-pass membrane protein</topology>
    </subcellularLocation>
</comment>
<comment type="similarity">
    <text evidence="1">Belongs to the peptidase A8 family.</text>
</comment>
<evidence type="ECO:0000255" key="1">
    <source>
        <dbReference type="HAMAP-Rule" id="MF_00161"/>
    </source>
</evidence>
<feature type="chain" id="PRO_1000097229" description="Lipoprotein signal peptidase">
    <location>
        <begin position="1"/>
        <end position="167"/>
    </location>
</feature>
<feature type="transmembrane region" description="Helical" evidence="1">
    <location>
        <begin position="67"/>
        <end position="87"/>
    </location>
</feature>
<feature type="transmembrane region" description="Helical" evidence="1">
    <location>
        <begin position="91"/>
        <end position="111"/>
    </location>
</feature>
<feature type="transmembrane region" description="Helical" evidence="1">
    <location>
        <begin position="127"/>
        <end position="147"/>
    </location>
</feature>
<feature type="active site" evidence="1">
    <location>
        <position position="118"/>
    </location>
</feature>
<feature type="active site" evidence="1">
    <location>
        <position position="136"/>
    </location>
</feature>
<name>LSPA_BEII9</name>